<organism>
    <name type="scientific">Pseudomonas fluorescens (strain Pf0-1)</name>
    <dbReference type="NCBI Taxonomy" id="205922"/>
    <lineage>
        <taxon>Bacteria</taxon>
        <taxon>Pseudomonadati</taxon>
        <taxon>Pseudomonadota</taxon>
        <taxon>Gammaproteobacteria</taxon>
        <taxon>Pseudomonadales</taxon>
        <taxon>Pseudomonadaceae</taxon>
        <taxon>Pseudomonas</taxon>
    </lineage>
</organism>
<protein>
    <recommendedName>
        <fullName evidence="1">UDP-N-acetylglucosamine--N-acetylmuramyl-(pentapeptide) pyrophosphoryl-undecaprenol N-acetylglucosamine transferase</fullName>
        <ecNumber evidence="1">2.4.1.227</ecNumber>
    </recommendedName>
    <alternativeName>
        <fullName evidence="1">Undecaprenyl-PP-MurNAc-pentapeptide-UDPGlcNAc GlcNAc transferase</fullName>
    </alternativeName>
</protein>
<gene>
    <name evidence="1" type="primary">murG</name>
    <name type="ordered locus">Pfl01_4673</name>
</gene>
<feature type="chain" id="PRO_0000225083" description="UDP-N-acetylglucosamine--N-acetylmuramyl-(pentapeptide) pyrophosphoryl-undecaprenol N-acetylglucosamine transferase">
    <location>
        <begin position="1"/>
        <end position="356"/>
    </location>
</feature>
<feature type="binding site" evidence="1">
    <location>
        <begin position="12"/>
        <end position="14"/>
    </location>
    <ligand>
        <name>UDP-N-acetyl-alpha-D-glucosamine</name>
        <dbReference type="ChEBI" id="CHEBI:57705"/>
    </ligand>
</feature>
<feature type="binding site" evidence="1">
    <location>
        <position position="124"/>
    </location>
    <ligand>
        <name>UDP-N-acetyl-alpha-D-glucosamine</name>
        <dbReference type="ChEBI" id="CHEBI:57705"/>
    </ligand>
</feature>
<feature type="binding site" evidence="1">
    <location>
        <position position="163"/>
    </location>
    <ligand>
        <name>UDP-N-acetyl-alpha-D-glucosamine</name>
        <dbReference type="ChEBI" id="CHEBI:57705"/>
    </ligand>
</feature>
<feature type="binding site" evidence="1">
    <location>
        <position position="188"/>
    </location>
    <ligand>
        <name>UDP-N-acetyl-alpha-D-glucosamine</name>
        <dbReference type="ChEBI" id="CHEBI:57705"/>
    </ligand>
</feature>
<feature type="binding site" evidence="1">
    <location>
        <position position="242"/>
    </location>
    <ligand>
        <name>UDP-N-acetyl-alpha-D-glucosamine</name>
        <dbReference type="ChEBI" id="CHEBI:57705"/>
    </ligand>
</feature>
<feature type="binding site" evidence="1">
    <location>
        <position position="287"/>
    </location>
    <ligand>
        <name>UDP-N-acetyl-alpha-D-glucosamine</name>
        <dbReference type="ChEBI" id="CHEBI:57705"/>
    </ligand>
</feature>
<accession>Q3K744</accession>
<keyword id="KW-0131">Cell cycle</keyword>
<keyword id="KW-0132">Cell division</keyword>
<keyword id="KW-0997">Cell inner membrane</keyword>
<keyword id="KW-1003">Cell membrane</keyword>
<keyword id="KW-0133">Cell shape</keyword>
<keyword id="KW-0961">Cell wall biogenesis/degradation</keyword>
<keyword id="KW-0328">Glycosyltransferase</keyword>
<keyword id="KW-0472">Membrane</keyword>
<keyword id="KW-0573">Peptidoglycan synthesis</keyword>
<keyword id="KW-0808">Transferase</keyword>
<proteinExistence type="inferred from homology"/>
<reference key="1">
    <citation type="journal article" date="2009" name="Genome Biol.">
        <title>Genomic and genetic analyses of diversity and plant interactions of Pseudomonas fluorescens.</title>
        <authorList>
            <person name="Silby M.W."/>
            <person name="Cerdeno-Tarraga A.M."/>
            <person name="Vernikos G.S."/>
            <person name="Giddens S.R."/>
            <person name="Jackson R.W."/>
            <person name="Preston G.M."/>
            <person name="Zhang X.-X."/>
            <person name="Moon C.D."/>
            <person name="Gehrig S.M."/>
            <person name="Godfrey S.A.C."/>
            <person name="Knight C.G."/>
            <person name="Malone J.G."/>
            <person name="Robinson Z."/>
            <person name="Spiers A.J."/>
            <person name="Harris S."/>
            <person name="Challis G.L."/>
            <person name="Yaxley A.M."/>
            <person name="Harris D."/>
            <person name="Seeger K."/>
            <person name="Murphy L."/>
            <person name="Rutter S."/>
            <person name="Squares R."/>
            <person name="Quail M.A."/>
            <person name="Saunders E."/>
            <person name="Mavromatis K."/>
            <person name="Brettin T.S."/>
            <person name="Bentley S.D."/>
            <person name="Hothersall J."/>
            <person name="Stephens E."/>
            <person name="Thomas C.M."/>
            <person name="Parkhill J."/>
            <person name="Levy S.B."/>
            <person name="Rainey P.B."/>
            <person name="Thomson N.R."/>
        </authorList>
    </citation>
    <scope>NUCLEOTIDE SEQUENCE [LARGE SCALE GENOMIC DNA]</scope>
    <source>
        <strain>Pf0-1</strain>
    </source>
</reference>
<comment type="function">
    <text evidence="1">Cell wall formation. Catalyzes the transfer of a GlcNAc subunit on undecaprenyl-pyrophosphoryl-MurNAc-pentapeptide (lipid intermediate I) to form undecaprenyl-pyrophosphoryl-MurNAc-(pentapeptide)GlcNAc (lipid intermediate II).</text>
</comment>
<comment type="catalytic activity">
    <reaction evidence="1">
        <text>di-trans,octa-cis-undecaprenyl diphospho-N-acetyl-alpha-D-muramoyl-L-alanyl-D-glutamyl-meso-2,6-diaminopimeloyl-D-alanyl-D-alanine + UDP-N-acetyl-alpha-D-glucosamine = di-trans,octa-cis-undecaprenyl diphospho-[N-acetyl-alpha-D-glucosaminyl-(1-&gt;4)]-N-acetyl-alpha-D-muramoyl-L-alanyl-D-glutamyl-meso-2,6-diaminopimeloyl-D-alanyl-D-alanine + UDP + H(+)</text>
        <dbReference type="Rhea" id="RHEA:31227"/>
        <dbReference type="ChEBI" id="CHEBI:15378"/>
        <dbReference type="ChEBI" id="CHEBI:57705"/>
        <dbReference type="ChEBI" id="CHEBI:58223"/>
        <dbReference type="ChEBI" id="CHEBI:61387"/>
        <dbReference type="ChEBI" id="CHEBI:61388"/>
        <dbReference type="EC" id="2.4.1.227"/>
    </reaction>
</comment>
<comment type="pathway">
    <text evidence="1">Cell wall biogenesis; peptidoglycan biosynthesis.</text>
</comment>
<comment type="subcellular location">
    <subcellularLocation>
        <location evidence="1">Cell inner membrane</location>
        <topology evidence="1">Peripheral membrane protein</topology>
        <orientation evidence="1">Cytoplasmic side</orientation>
    </subcellularLocation>
</comment>
<comment type="similarity">
    <text evidence="1">Belongs to the glycosyltransferase 28 family. MurG subfamily.</text>
</comment>
<dbReference type="EC" id="2.4.1.227" evidence="1"/>
<dbReference type="EMBL" id="CP000094">
    <property type="protein sequence ID" value="ABA76410.1"/>
    <property type="molecule type" value="Genomic_DNA"/>
</dbReference>
<dbReference type="RefSeq" id="WP_011335863.1">
    <property type="nucleotide sequence ID" value="NC_007492.2"/>
</dbReference>
<dbReference type="SMR" id="Q3K744"/>
<dbReference type="CAZy" id="GT28">
    <property type="family name" value="Glycosyltransferase Family 28"/>
</dbReference>
<dbReference type="KEGG" id="pfo:Pfl01_4673"/>
<dbReference type="eggNOG" id="COG0707">
    <property type="taxonomic scope" value="Bacteria"/>
</dbReference>
<dbReference type="HOGENOM" id="CLU_037404_2_0_6"/>
<dbReference type="UniPathway" id="UPA00219"/>
<dbReference type="Proteomes" id="UP000002704">
    <property type="component" value="Chromosome"/>
</dbReference>
<dbReference type="GO" id="GO:0005886">
    <property type="term" value="C:plasma membrane"/>
    <property type="evidence" value="ECO:0007669"/>
    <property type="project" value="UniProtKB-SubCell"/>
</dbReference>
<dbReference type="GO" id="GO:0051991">
    <property type="term" value="F:UDP-N-acetyl-D-glucosamine:N-acetylmuramoyl-L-alanyl-D-glutamyl-meso-2,6-diaminopimelyl-D-alanyl-D-alanine-diphosphoundecaprenol 4-beta-N-acetylglucosaminlytransferase activity"/>
    <property type="evidence" value="ECO:0007669"/>
    <property type="project" value="RHEA"/>
</dbReference>
<dbReference type="GO" id="GO:0050511">
    <property type="term" value="F:undecaprenyldiphospho-muramoylpentapeptide beta-N-acetylglucosaminyltransferase activity"/>
    <property type="evidence" value="ECO:0007669"/>
    <property type="project" value="UniProtKB-UniRule"/>
</dbReference>
<dbReference type="GO" id="GO:0005975">
    <property type="term" value="P:carbohydrate metabolic process"/>
    <property type="evidence" value="ECO:0007669"/>
    <property type="project" value="InterPro"/>
</dbReference>
<dbReference type="GO" id="GO:0051301">
    <property type="term" value="P:cell division"/>
    <property type="evidence" value="ECO:0007669"/>
    <property type="project" value="UniProtKB-KW"/>
</dbReference>
<dbReference type="GO" id="GO:0071555">
    <property type="term" value="P:cell wall organization"/>
    <property type="evidence" value="ECO:0007669"/>
    <property type="project" value="UniProtKB-KW"/>
</dbReference>
<dbReference type="GO" id="GO:0030259">
    <property type="term" value="P:lipid glycosylation"/>
    <property type="evidence" value="ECO:0007669"/>
    <property type="project" value="UniProtKB-UniRule"/>
</dbReference>
<dbReference type="GO" id="GO:0009252">
    <property type="term" value="P:peptidoglycan biosynthetic process"/>
    <property type="evidence" value="ECO:0007669"/>
    <property type="project" value="UniProtKB-UniRule"/>
</dbReference>
<dbReference type="GO" id="GO:0008360">
    <property type="term" value="P:regulation of cell shape"/>
    <property type="evidence" value="ECO:0007669"/>
    <property type="project" value="UniProtKB-KW"/>
</dbReference>
<dbReference type="CDD" id="cd03785">
    <property type="entry name" value="GT28_MurG"/>
    <property type="match status" value="1"/>
</dbReference>
<dbReference type="Gene3D" id="3.40.50.2000">
    <property type="entry name" value="Glycogen Phosphorylase B"/>
    <property type="match status" value="2"/>
</dbReference>
<dbReference type="HAMAP" id="MF_00033">
    <property type="entry name" value="MurG"/>
    <property type="match status" value="1"/>
</dbReference>
<dbReference type="InterPro" id="IPR006009">
    <property type="entry name" value="GlcNAc_MurG"/>
</dbReference>
<dbReference type="InterPro" id="IPR007235">
    <property type="entry name" value="Glyco_trans_28_C"/>
</dbReference>
<dbReference type="InterPro" id="IPR004276">
    <property type="entry name" value="GlycoTrans_28_N"/>
</dbReference>
<dbReference type="NCBIfam" id="TIGR01133">
    <property type="entry name" value="murG"/>
    <property type="match status" value="1"/>
</dbReference>
<dbReference type="PANTHER" id="PTHR21015:SF22">
    <property type="entry name" value="GLYCOSYLTRANSFERASE"/>
    <property type="match status" value="1"/>
</dbReference>
<dbReference type="PANTHER" id="PTHR21015">
    <property type="entry name" value="UDP-N-ACETYLGLUCOSAMINE--N-ACETYLMURAMYL-(PENTAPEPTIDE) PYROPHOSPHORYL-UNDECAPRENOL N-ACETYLGLUCOSAMINE TRANSFERASE 1"/>
    <property type="match status" value="1"/>
</dbReference>
<dbReference type="Pfam" id="PF04101">
    <property type="entry name" value="Glyco_tran_28_C"/>
    <property type="match status" value="1"/>
</dbReference>
<dbReference type="Pfam" id="PF03033">
    <property type="entry name" value="Glyco_transf_28"/>
    <property type="match status" value="1"/>
</dbReference>
<dbReference type="SUPFAM" id="SSF53756">
    <property type="entry name" value="UDP-Glycosyltransferase/glycogen phosphorylase"/>
    <property type="match status" value="1"/>
</dbReference>
<sequence>MGANVLIMAGGTGGHVFPALACAREFQARGYTVHWLGTPRGIENDLVPAAGLELHRINATGLRGKGKLSLLKAPFMLLKSVWQARAIIRRLRPVCVVGFGGYVTGPGGLAAKLAGVPVIVHEQNAVAGTANRLLVPFAARVCEAFPDTFTLSDSRRTTGNPVRSELFLETPRPALAGRKARLLILGGSLGAEPLNKLLPEALAQVAADLRPEVFHQAGRNHDEVTAERYRAAGVDAQVQPFIKDMAQAYGWADLVVCRAGALTISELAAAGLPSMLVPLPHAIDDHQTRNADYLAREGAAFLMPQRTTGAADLAARLTEVLMQPQRLEQMAQAARRLAKPEATRSVVDTCLEVAHG</sequence>
<name>MURG_PSEPF</name>
<evidence type="ECO:0000255" key="1">
    <source>
        <dbReference type="HAMAP-Rule" id="MF_00033"/>
    </source>
</evidence>